<dbReference type="EC" id="2.3.1.30"/>
<dbReference type="EMBL" id="AL123456">
    <property type="protein sequence ID" value="CCP45123.1"/>
    <property type="molecule type" value="Genomic_DNA"/>
</dbReference>
<dbReference type="PIR" id="H70660">
    <property type="entry name" value="H70660"/>
</dbReference>
<dbReference type="RefSeq" id="NP_216851.1">
    <property type="nucleotide sequence ID" value="NC_000962.3"/>
</dbReference>
<dbReference type="RefSeq" id="WP_003411985.1">
    <property type="nucleotide sequence ID" value="NZ_NVQJ01000012.1"/>
</dbReference>
<dbReference type="SMR" id="P95231"/>
<dbReference type="FunCoup" id="P95231">
    <property type="interactions" value="206"/>
</dbReference>
<dbReference type="STRING" id="83332.Rv2335"/>
<dbReference type="PaxDb" id="83332-Rv2335"/>
<dbReference type="DNASU" id="886012"/>
<dbReference type="GeneID" id="45426319"/>
<dbReference type="GeneID" id="886012"/>
<dbReference type="KEGG" id="mtu:Rv2335"/>
<dbReference type="KEGG" id="mtv:RVBD_2335"/>
<dbReference type="TubercuList" id="Rv2335"/>
<dbReference type="eggNOG" id="COG1045">
    <property type="taxonomic scope" value="Bacteria"/>
</dbReference>
<dbReference type="InParanoid" id="P95231"/>
<dbReference type="OrthoDB" id="9801456at2"/>
<dbReference type="PhylomeDB" id="P95231"/>
<dbReference type="BRENDA" id="2.3.1.30">
    <property type="organism ID" value="3445"/>
</dbReference>
<dbReference type="Reactome" id="R-MTU-936721">
    <property type="pathway name" value="Cysteine synthesis from O-acetylserine"/>
</dbReference>
<dbReference type="UniPathway" id="UPA00136">
    <property type="reaction ID" value="UER00199"/>
</dbReference>
<dbReference type="Proteomes" id="UP000001584">
    <property type="component" value="Chromosome"/>
</dbReference>
<dbReference type="GO" id="GO:0005829">
    <property type="term" value="C:cytosol"/>
    <property type="evidence" value="ECO:0000318"/>
    <property type="project" value="GO_Central"/>
</dbReference>
<dbReference type="GO" id="GO:0009001">
    <property type="term" value="F:serine O-acetyltransferase activity"/>
    <property type="evidence" value="ECO:0000318"/>
    <property type="project" value="GO_Central"/>
</dbReference>
<dbReference type="GO" id="GO:0006535">
    <property type="term" value="P:cysteine biosynthetic process from serine"/>
    <property type="evidence" value="ECO:0000304"/>
    <property type="project" value="Reactome"/>
</dbReference>
<dbReference type="CDD" id="cd03354">
    <property type="entry name" value="LbH_SAT"/>
    <property type="match status" value="1"/>
</dbReference>
<dbReference type="FunFam" id="1.10.3130.10:FF:000003">
    <property type="entry name" value="Serine acetyltransferase"/>
    <property type="match status" value="1"/>
</dbReference>
<dbReference type="FunFam" id="2.160.10.10:FF:000007">
    <property type="entry name" value="Serine acetyltransferase"/>
    <property type="match status" value="1"/>
</dbReference>
<dbReference type="Gene3D" id="2.160.10.10">
    <property type="entry name" value="Hexapeptide repeat proteins"/>
    <property type="match status" value="1"/>
</dbReference>
<dbReference type="Gene3D" id="1.10.3130.10">
    <property type="entry name" value="serine acetyltransferase, domain 1"/>
    <property type="match status" value="1"/>
</dbReference>
<dbReference type="InterPro" id="IPR001451">
    <property type="entry name" value="Hexapep"/>
</dbReference>
<dbReference type="InterPro" id="IPR018357">
    <property type="entry name" value="Hexapep_transf_CS"/>
</dbReference>
<dbReference type="InterPro" id="IPR045304">
    <property type="entry name" value="LbH_SAT"/>
</dbReference>
<dbReference type="InterPro" id="IPR042122">
    <property type="entry name" value="Ser_AcTrfase_N_sf"/>
</dbReference>
<dbReference type="InterPro" id="IPR005881">
    <property type="entry name" value="Ser_O-AcTrfase"/>
</dbReference>
<dbReference type="InterPro" id="IPR053376">
    <property type="entry name" value="Serine_acetyltransferase"/>
</dbReference>
<dbReference type="InterPro" id="IPR011004">
    <property type="entry name" value="Trimer_LpxA-like_sf"/>
</dbReference>
<dbReference type="NCBIfam" id="TIGR01172">
    <property type="entry name" value="cysE"/>
    <property type="match status" value="1"/>
</dbReference>
<dbReference type="NCBIfam" id="NF041874">
    <property type="entry name" value="EPS_EpsC"/>
    <property type="match status" value="1"/>
</dbReference>
<dbReference type="PANTHER" id="PTHR42811">
    <property type="entry name" value="SERINE ACETYLTRANSFERASE"/>
    <property type="match status" value="1"/>
</dbReference>
<dbReference type="Pfam" id="PF00132">
    <property type="entry name" value="Hexapep"/>
    <property type="match status" value="1"/>
</dbReference>
<dbReference type="SUPFAM" id="SSF51161">
    <property type="entry name" value="Trimeric LpxA-like enzymes"/>
    <property type="match status" value="1"/>
</dbReference>
<dbReference type="PROSITE" id="PS00101">
    <property type="entry name" value="HEXAPEP_TRANSFERASES"/>
    <property type="match status" value="1"/>
</dbReference>
<keyword id="KW-0012">Acyltransferase</keyword>
<keyword id="KW-0028">Amino-acid biosynthesis</keyword>
<keyword id="KW-0198">Cysteine biosynthesis</keyword>
<keyword id="KW-0963">Cytoplasm</keyword>
<keyword id="KW-1185">Reference proteome</keyword>
<keyword id="KW-0677">Repeat</keyword>
<keyword id="KW-0808">Transferase</keyword>
<evidence type="ECO:0000250" key="1"/>
<evidence type="ECO:0000269" key="2">
    <source>
    </source>
</evidence>
<evidence type="ECO:0000305" key="3"/>
<reference key="1">
    <citation type="journal article" date="1998" name="Nature">
        <title>Deciphering the biology of Mycobacterium tuberculosis from the complete genome sequence.</title>
        <authorList>
            <person name="Cole S.T."/>
            <person name="Brosch R."/>
            <person name="Parkhill J."/>
            <person name="Garnier T."/>
            <person name="Churcher C.M."/>
            <person name="Harris D.E."/>
            <person name="Gordon S.V."/>
            <person name="Eiglmeier K."/>
            <person name="Gas S."/>
            <person name="Barry C.E. III"/>
            <person name="Tekaia F."/>
            <person name="Badcock K."/>
            <person name="Basham D."/>
            <person name="Brown D."/>
            <person name="Chillingworth T."/>
            <person name="Connor R."/>
            <person name="Davies R.M."/>
            <person name="Devlin K."/>
            <person name="Feltwell T."/>
            <person name="Gentles S."/>
            <person name="Hamlin N."/>
            <person name="Holroyd S."/>
            <person name="Hornsby T."/>
            <person name="Jagels K."/>
            <person name="Krogh A."/>
            <person name="McLean J."/>
            <person name="Moule S."/>
            <person name="Murphy L.D."/>
            <person name="Oliver S."/>
            <person name="Osborne J."/>
            <person name="Quail M.A."/>
            <person name="Rajandream M.A."/>
            <person name="Rogers J."/>
            <person name="Rutter S."/>
            <person name="Seeger K."/>
            <person name="Skelton S."/>
            <person name="Squares S."/>
            <person name="Squares R."/>
            <person name="Sulston J.E."/>
            <person name="Taylor K."/>
            <person name="Whitehead S."/>
            <person name="Barrell B.G."/>
        </authorList>
    </citation>
    <scope>NUCLEOTIDE SEQUENCE [LARGE SCALE GENOMIC DNA]</scope>
    <source>
        <strain>ATCC 25618 / H37Rv</strain>
    </source>
</reference>
<reference key="2">
    <citation type="journal article" date="2003" name="Proc. Natl. Acad. Sci. U.S.A.">
        <title>Genetic requirements for mycobacterial survival during infection.</title>
        <authorList>
            <person name="Sassetti C.M."/>
            <person name="Rubin E.J."/>
        </authorList>
    </citation>
    <scope>DISRUPTION PHENOTYPE</scope>
    <source>
        <strain>ATCC 25618 / H37Rv</strain>
    </source>
</reference>
<reference key="3">
    <citation type="journal article" date="2008" name="BMC Syst. Biol.">
        <title>targetTB: a target identification pipeline for Mycobacterium tuberculosis through an interactome, reactome and genome-scale structural analysis.</title>
        <authorList>
            <person name="Raman K."/>
            <person name="Yeturu K."/>
            <person name="Chandra N."/>
        </authorList>
    </citation>
    <scope>IDENTIFICATION AS A DRUG TARGET [LARGE SCALE ANALYSIS]</scope>
</reference>
<reference key="4">
    <citation type="journal article" date="2011" name="Mol. Cell. Proteomics">
        <title>Proteogenomic analysis of Mycobacterium tuberculosis by high resolution mass spectrometry.</title>
        <authorList>
            <person name="Kelkar D.S."/>
            <person name="Kumar D."/>
            <person name="Kumar P."/>
            <person name="Balakrishnan L."/>
            <person name="Muthusamy B."/>
            <person name="Yadav A.K."/>
            <person name="Shrivastava P."/>
            <person name="Marimuthu A."/>
            <person name="Anand S."/>
            <person name="Sundaram H."/>
            <person name="Kingsbury R."/>
            <person name="Harsha H.C."/>
            <person name="Nair B."/>
            <person name="Prasad T.S."/>
            <person name="Chauhan D.S."/>
            <person name="Katoch K."/>
            <person name="Katoch V.M."/>
            <person name="Kumar P."/>
            <person name="Chaerkady R."/>
            <person name="Ramachandran S."/>
            <person name="Dash D."/>
            <person name="Pandey A."/>
        </authorList>
    </citation>
    <scope>IDENTIFICATION BY MASS SPECTROMETRY [LARGE SCALE ANALYSIS]</scope>
    <source>
        <strain>ATCC 25618 / H37Rv</strain>
    </source>
</reference>
<name>CYSE_MYCTU</name>
<organism>
    <name type="scientific">Mycobacterium tuberculosis (strain ATCC 25618 / H37Rv)</name>
    <dbReference type="NCBI Taxonomy" id="83332"/>
    <lineage>
        <taxon>Bacteria</taxon>
        <taxon>Bacillati</taxon>
        <taxon>Actinomycetota</taxon>
        <taxon>Actinomycetes</taxon>
        <taxon>Mycobacteriales</taxon>
        <taxon>Mycobacteriaceae</taxon>
        <taxon>Mycobacterium</taxon>
        <taxon>Mycobacterium tuberculosis complex</taxon>
    </lineage>
</organism>
<comment type="function">
    <text evidence="1">Catalyzes the acetylation of serine by acetyl-CoA to produce O-acetylserine (OAS).</text>
</comment>
<comment type="catalytic activity">
    <reaction>
        <text>L-serine + acetyl-CoA = O-acetyl-L-serine + CoA</text>
        <dbReference type="Rhea" id="RHEA:24560"/>
        <dbReference type="ChEBI" id="CHEBI:33384"/>
        <dbReference type="ChEBI" id="CHEBI:57287"/>
        <dbReference type="ChEBI" id="CHEBI:57288"/>
        <dbReference type="ChEBI" id="CHEBI:58340"/>
        <dbReference type="EC" id="2.3.1.30"/>
    </reaction>
</comment>
<comment type="pathway">
    <text>Amino-acid biosynthesis; L-cysteine biosynthesis; L-cysteine from L-serine: step 1/2.</text>
</comment>
<comment type="subcellular location">
    <subcellularLocation>
        <location evidence="1">Cytoplasm</location>
    </subcellularLocation>
</comment>
<comment type="disruption phenotype">
    <text evidence="2">Strains lacking this gene are shown to be attenuated in a mouse tuberculosis model.</text>
</comment>
<comment type="miscellaneous">
    <text>Was identified as a high-confidence drug target.</text>
</comment>
<comment type="similarity">
    <text evidence="3">Belongs to the transferase hexapeptide repeat family.</text>
</comment>
<protein>
    <recommendedName>
        <fullName>Serine acetyltransferase</fullName>
        <shortName>SAT</shortName>
        <ecNumber>2.3.1.30</ecNumber>
    </recommendedName>
</protein>
<feature type="chain" id="PRO_0000401135" description="Serine acetyltransferase">
    <location>
        <begin position="1"/>
        <end position="229"/>
    </location>
</feature>
<sequence length="229" mass="23770">MLTAMRGDIRAARERDPAAPTALEVIFCYPGVHAVWGHRLAHWLWQRGARLLARAAAEFTRILTGVDIHPGAVIGARVFIDHATGVVIGETAEVGDDVTIYHGVTLGGSGMVGGKRHPTVGDRVIIGAGAKVLGPIKIGEDSRIGANAVVVKPVPPSAVVVGVPGQVIGQSQPSPGGPFDWRLPDLVGASLDSLLTRVARLEALGGGPQAAGVIRPPEAGIWHGEDFSI</sequence>
<accession>P95231</accession>
<accession>L0TAX3</accession>
<gene>
    <name type="primary">cysE</name>
    <name type="ordered locus">Rv2335</name>
</gene>
<proteinExistence type="evidence at protein level"/>